<name>TIG_BACCR</name>
<gene>
    <name evidence="1" type="primary">tig</name>
    <name type="ordered locus">BC_4480</name>
</gene>
<reference key="1">
    <citation type="journal article" date="2003" name="Nature">
        <title>Genome sequence of Bacillus cereus and comparative analysis with Bacillus anthracis.</title>
        <authorList>
            <person name="Ivanova N."/>
            <person name="Sorokin A."/>
            <person name="Anderson I."/>
            <person name="Galleron N."/>
            <person name="Candelon B."/>
            <person name="Kapatral V."/>
            <person name="Bhattacharyya A."/>
            <person name="Reznik G."/>
            <person name="Mikhailova N."/>
            <person name="Lapidus A."/>
            <person name="Chu L."/>
            <person name="Mazur M."/>
            <person name="Goltsman E."/>
            <person name="Larsen N."/>
            <person name="D'Souza M."/>
            <person name="Walunas T."/>
            <person name="Grechkin Y."/>
            <person name="Pusch G."/>
            <person name="Haselkorn R."/>
            <person name="Fonstein M."/>
            <person name="Ehrlich S.D."/>
            <person name="Overbeek R."/>
            <person name="Kyrpides N.C."/>
        </authorList>
    </citation>
    <scope>NUCLEOTIDE SEQUENCE [LARGE SCALE GENOMIC DNA]</scope>
    <source>
        <strain>ATCC 14579 / DSM 31 / CCUG 7414 / JCM 2152 / NBRC 15305 / NCIMB 9373 / NCTC 2599 / NRRL B-3711</strain>
    </source>
</reference>
<organism>
    <name type="scientific">Bacillus cereus (strain ATCC 14579 / DSM 31 / CCUG 7414 / JCM 2152 / NBRC 15305 / NCIMB 9373 / NCTC 2599 / NRRL B-3711)</name>
    <dbReference type="NCBI Taxonomy" id="226900"/>
    <lineage>
        <taxon>Bacteria</taxon>
        <taxon>Bacillati</taxon>
        <taxon>Bacillota</taxon>
        <taxon>Bacilli</taxon>
        <taxon>Bacillales</taxon>
        <taxon>Bacillaceae</taxon>
        <taxon>Bacillus</taxon>
        <taxon>Bacillus cereus group</taxon>
    </lineage>
</organism>
<evidence type="ECO:0000255" key="1">
    <source>
        <dbReference type="HAMAP-Rule" id="MF_00303"/>
    </source>
</evidence>
<keyword id="KW-0131">Cell cycle</keyword>
<keyword id="KW-0132">Cell division</keyword>
<keyword id="KW-0143">Chaperone</keyword>
<keyword id="KW-0963">Cytoplasm</keyword>
<keyword id="KW-0413">Isomerase</keyword>
<keyword id="KW-1185">Reference proteome</keyword>
<keyword id="KW-0697">Rotamase</keyword>
<protein>
    <recommendedName>
        <fullName evidence="1">Trigger factor</fullName>
        <shortName evidence="1">TF</shortName>
        <ecNumber evidence="1">5.2.1.8</ecNumber>
    </recommendedName>
    <alternativeName>
        <fullName evidence="1">PPIase</fullName>
    </alternativeName>
</protein>
<accession>Q812Q9</accession>
<sequence>MSTKWEKLEGNVGVLTIEVDAKEVNNSIDAAFKKVVKTINVPGFRKGKMPRPLFEQRFGIESLYQDALDIILPKAYGEAIEEAGIFPVDHPEIDIEKFEKNANLIFTAKVTVKPEVKLGEYKGLAVEKVETTVTDEDVENELKSLQERQAELVVKEEGTVENGDTAVIDFEGFVDGEAFEGGKGENYSLAIGSGTFIPGFEEQVIGLKSGESKDVEVSFPEEYHAAELAGKPATFKVTIHEIKTKELPELNDEFAKEADEAVATLDELKAKLRTNLEEGKKHEAEHKVRDEVVELAAANAEIEIPEAMINTELDRMVREFEQRLSQQGMNLELYYQFTGTDADKLKEQMKEDAQKRVRINLVLEAIIEAENIEVTEEEVTAEVEKMAEMYGMPVDAIKQALGSVDALAEDLKVRKAVDFLVENAA</sequence>
<feature type="chain" id="PRO_0000179307" description="Trigger factor">
    <location>
        <begin position="1"/>
        <end position="425"/>
    </location>
</feature>
<feature type="domain" description="PPIase FKBP-type" evidence="1">
    <location>
        <begin position="163"/>
        <end position="248"/>
    </location>
</feature>
<comment type="function">
    <text evidence="1">Involved in protein export. Acts as a chaperone by maintaining the newly synthesized protein in an open conformation. Functions as a peptidyl-prolyl cis-trans isomerase.</text>
</comment>
<comment type="catalytic activity">
    <reaction evidence="1">
        <text>[protein]-peptidylproline (omega=180) = [protein]-peptidylproline (omega=0)</text>
        <dbReference type="Rhea" id="RHEA:16237"/>
        <dbReference type="Rhea" id="RHEA-COMP:10747"/>
        <dbReference type="Rhea" id="RHEA-COMP:10748"/>
        <dbReference type="ChEBI" id="CHEBI:83833"/>
        <dbReference type="ChEBI" id="CHEBI:83834"/>
        <dbReference type="EC" id="5.2.1.8"/>
    </reaction>
</comment>
<comment type="subcellular location">
    <subcellularLocation>
        <location>Cytoplasm</location>
    </subcellularLocation>
    <text evidence="1">About half TF is bound to the ribosome near the polypeptide exit tunnel while the other half is free in the cytoplasm.</text>
</comment>
<comment type="domain">
    <text evidence="1">Consists of 3 domains; the N-terminus binds the ribosome, the middle domain has PPIase activity, while the C-terminus has intrinsic chaperone activity on its own.</text>
</comment>
<comment type="similarity">
    <text evidence="1">Belongs to the FKBP-type PPIase family. Tig subfamily.</text>
</comment>
<dbReference type="EC" id="5.2.1.8" evidence="1"/>
<dbReference type="EMBL" id="AE016877">
    <property type="protein sequence ID" value="AAP11393.1"/>
    <property type="molecule type" value="Genomic_DNA"/>
</dbReference>
<dbReference type="RefSeq" id="NP_834192.1">
    <property type="nucleotide sequence ID" value="NC_004722.1"/>
</dbReference>
<dbReference type="RefSeq" id="WP_000105215.1">
    <property type="nucleotide sequence ID" value="NZ_CP138336.1"/>
</dbReference>
<dbReference type="SMR" id="Q812Q9"/>
<dbReference type="STRING" id="226900.BC_4480"/>
<dbReference type="GeneID" id="72451149"/>
<dbReference type="KEGG" id="bce:BC4480"/>
<dbReference type="PATRIC" id="fig|226900.8.peg.4633"/>
<dbReference type="HOGENOM" id="CLU_033058_3_2_9"/>
<dbReference type="OrthoDB" id="9767721at2"/>
<dbReference type="Proteomes" id="UP000001417">
    <property type="component" value="Chromosome"/>
</dbReference>
<dbReference type="GO" id="GO:0005737">
    <property type="term" value="C:cytoplasm"/>
    <property type="evidence" value="ECO:0007669"/>
    <property type="project" value="UniProtKB-SubCell"/>
</dbReference>
<dbReference type="GO" id="GO:0003755">
    <property type="term" value="F:peptidyl-prolyl cis-trans isomerase activity"/>
    <property type="evidence" value="ECO:0000318"/>
    <property type="project" value="GO_Central"/>
</dbReference>
<dbReference type="GO" id="GO:0044183">
    <property type="term" value="F:protein folding chaperone"/>
    <property type="evidence" value="ECO:0000318"/>
    <property type="project" value="GO_Central"/>
</dbReference>
<dbReference type="GO" id="GO:0043022">
    <property type="term" value="F:ribosome binding"/>
    <property type="evidence" value="ECO:0000318"/>
    <property type="project" value="GO_Central"/>
</dbReference>
<dbReference type="GO" id="GO:0051083">
    <property type="term" value="P:'de novo' cotranslational protein folding"/>
    <property type="evidence" value="ECO:0000318"/>
    <property type="project" value="GO_Central"/>
</dbReference>
<dbReference type="GO" id="GO:0051301">
    <property type="term" value="P:cell division"/>
    <property type="evidence" value="ECO:0007669"/>
    <property type="project" value="UniProtKB-KW"/>
</dbReference>
<dbReference type="GO" id="GO:0061077">
    <property type="term" value="P:chaperone-mediated protein folding"/>
    <property type="evidence" value="ECO:0000318"/>
    <property type="project" value="GO_Central"/>
</dbReference>
<dbReference type="GO" id="GO:0015031">
    <property type="term" value="P:protein transport"/>
    <property type="evidence" value="ECO:0007669"/>
    <property type="project" value="UniProtKB-UniRule"/>
</dbReference>
<dbReference type="GO" id="GO:0043335">
    <property type="term" value="P:protein unfolding"/>
    <property type="evidence" value="ECO:0000318"/>
    <property type="project" value="GO_Central"/>
</dbReference>
<dbReference type="FunFam" id="3.10.50.40:FF:000001">
    <property type="entry name" value="Trigger factor"/>
    <property type="match status" value="1"/>
</dbReference>
<dbReference type="FunFam" id="3.30.70.1050:FF:000002">
    <property type="entry name" value="Trigger factor"/>
    <property type="match status" value="1"/>
</dbReference>
<dbReference type="Gene3D" id="3.10.50.40">
    <property type="match status" value="1"/>
</dbReference>
<dbReference type="Gene3D" id="3.30.70.1050">
    <property type="entry name" value="Trigger factor ribosome-binding domain"/>
    <property type="match status" value="1"/>
</dbReference>
<dbReference type="Gene3D" id="1.10.3120.10">
    <property type="entry name" value="Trigger factor, C-terminal domain"/>
    <property type="match status" value="1"/>
</dbReference>
<dbReference type="HAMAP" id="MF_00303">
    <property type="entry name" value="Trigger_factor_Tig"/>
    <property type="match status" value="1"/>
</dbReference>
<dbReference type="InterPro" id="IPR046357">
    <property type="entry name" value="PPIase_dom_sf"/>
</dbReference>
<dbReference type="InterPro" id="IPR001179">
    <property type="entry name" value="PPIase_FKBP_dom"/>
</dbReference>
<dbReference type="InterPro" id="IPR005215">
    <property type="entry name" value="Trig_fac"/>
</dbReference>
<dbReference type="InterPro" id="IPR008880">
    <property type="entry name" value="Trigger_fac_C"/>
</dbReference>
<dbReference type="InterPro" id="IPR037041">
    <property type="entry name" value="Trigger_fac_C_sf"/>
</dbReference>
<dbReference type="InterPro" id="IPR008881">
    <property type="entry name" value="Trigger_fac_ribosome-bd_bac"/>
</dbReference>
<dbReference type="InterPro" id="IPR036611">
    <property type="entry name" value="Trigger_fac_ribosome-bd_sf"/>
</dbReference>
<dbReference type="InterPro" id="IPR027304">
    <property type="entry name" value="Trigger_fact/SurA_dom_sf"/>
</dbReference>
<dbReference type="NCBIfam" id="TIGR00115">
    <property type="entry name" value="tig"/>
    <property type="match status" value="1"/>
</dbReference>
<dbReference type="PANTHER" id="PTHR30560">
    <property type="entry name" value="TRIGGER FACTOR CHAPERONE AND PEPTIDYL-PROLYL CIS/TRANS ISOMERASE"/>
    <property type="match status" value="1"/>
</dbReference>
<dbReference type="PANTHER" id="PTHR30560:SF3">
    <property type="entry name" value="TRIGGER FACTOR-LIKE PROTEIN TIG, CHLOROPLASTIC"/>
    <property type="match status" value="1"/>
</dbReference>
<dbReference type="Pfam" id="PF00254">
    <property type="entry name" value="FKBP_C"/>
    <property type="match status" value="1"/>
</dbReference>
<dbReference type="Pfam" id="PF05698">
    <property type="entry name" value="Trigger_C"/>
    <property type="match status" value="1"/>
</dbReference>
<dbReference type="Pfam" id="PF05697">
    <property type="entry name" value="Trigger_N"/>
    <property type="match status" value="1"/>
</dbReference>
<dbReference type="PIRSF" id="PIRSF003095">
    <property type="entry name" value="Trigger_factor"/>
    <property type="match status" value="1"/>
</dbReference>
<dbReference type="SUPFAM" id="SSF54534">
    <property type="entry name" value="FKBP-like"/>
    <property type="match status" value="1"/>
</dbReference>
<dbReference type="SUPFAM" id="SSF109998">
    <property type="entry name" value="Triger factor/SurA peptide-binding domain-like"/>
    <property type="match status" value="1"/>
</dbReference>
<dbReference type="SUPFAM" id="SSF102735">
    <property type="entry name" value="Trigger factor ribosome-binding domain"/>
    <property type="match status" value="1"/>
</dbReference>
<dbReference type="PROSITE" id="PS50059">
    <property type="entry name" value="FKBP_PPIASE"/>
    <property type="match status" value="1"/>
</dbReference>
<proteinExistence type="inferred from homology"/>